<comment type="function">
    <text evidence="1">Single strand-specific metallo-endoribonuclease involved in late-stage 70S ribosome quality control and in maturation of the 3' terminus of the 16S rRNA.</text>
</comment>
<comment type="cofactor">
    <cofactor evidence="1">
        <name>Zn(2+)</name>
        <dbReference type="ChEBI" id="CHEBI:29105"/>
    </cofactor>
    <text evidence="1">Binds 1 zinc ion.</text>
</comment>
<comment type="subcellular location">
    <subcellularLocation>
        <location evidence="1">Cytoplasm</location>
    </subcellularLocation>
</comment>
<comment type="similarity">
    <text evidence="1">Belongs to the endoribonuclease YbeY family.</text>
</comment>
<accession>B8G6K6</accession>
<feature type="chain" id="PRO_1000199962" description="Endoribonuclease YbeY">
    <location>
        <begin position="1"/>
        <end position="153"/>
    </location>
</feature>
<feature type="binding site" evidence="1">
    <location>
        <position position="118"/>
    </location>
    <ligand>
        <name>Zn(2+)</name>
        <dbReference type="ChEBI" id="CHEBI:29105"/>
        <note>catalytic</note>
    </ligand>
</feature>
<feature type="binding site" evidence="1">
    <location>
        <position position="122"/>
    </location>
    <ligand>
        <name>Zn(2+)</name>
        <dbReference type="ChEBI" id="CHEBI:29105"/>
        <note>catalytic</note>
    </ligand>
</feature>
<feature type="binding site" evidence="1">
    <location>
        <position position="128"/>
    </location>
    <ligand>
        <name>Zn(2+)</name>
        <dbReference type="ChEBI" id="CHEBI:29105"/>
        <note>catalytic</note>
    </ligand>
</feature>
<organism>
    <name type="scientific">Chloroflexus aggregans (strain MD-66 / DSM 9485)</name>
    <dbReference type="NCBI Taxonomy" id="326427"/>
    <lineage>
        <taxon>Bacteria</taxon>
        <taxon>Bacillati</taxon>
        <taxon>Chloroflexota</taxon>
        <taxon>Chloroflexia</taxon>
        <taxon>Chloroflexales</taxon>
        <taxon>Chloroflexineae</taxon>
        <taxon>Chloroflexaceae</taxon>
        <taxon>Chloroflexus</taxon>
    </lineage>
</organism>
<evidence type="ECO:0000255" key="1">
    <source>
        <dbReference type="HAMAP-Rule" id="MF_00009"/>
    </source>
</evidence>
<protein>
    <recommendedName>
        <fullName evidence="1">Endoribonuclease YbeY</fullName>
        <ecNumber evidence="1">3.1.-.-</ecNumber>
    </recommendedName>
</protein>
<sequence length="153" mass="16695">MTYTVEVLVDDDLAVDAALVERAAQAVLTAEQVPAGCEVCIRITTDAELHRLNRDFRGVDAPTDVLSFADDGNSSQFVTAPNLPRYLGDIAISYDRVLVQAAEYGHSPARELAYLTVHGMLHLLGYDHERGPADEALMRAREEAVMTALGLPR</sequence>
<reference key="1">
    <citation type="submission" date="2008-12" db="EMBL/GenBank/DDBJ databases">
        <title>Complete sequence of Chloroflexus aggregans DSM 9485.</title>
        <authorList>
            <consortium name="US DOE Joint Genome Institute"/>
            <person name="Lucas S."/>
            <person name="Copeland A."/>
            <person name="Lapidus A."/>
            <person name="Glavina del Rio T."/>
            <person name="Dalin E."/>
            <person name="Tice H."/>
            <person name="Pitluck S."/>
            <person name="Foster B."/>
            <person name="Larimer F."/>
            <person name="Land M."/>
            <person name="Hauser L."/>
            <person name="Kyrpides N."/>
            <person name="Mikhailova N."/>
            <person name="Bryant D.A."/>
            <person name="Richardson P."/>
        </authorList>
    </citation>
    <scope>NUCLEOTIDE SEQUENCE [LARGE SCALE GENOMIC DNA]</scope>
    <source>
        <strain>MD-66 / DSM 9485</strain>
    </source>
</reference>
<proteinExistence type="inferred from homology"/>
<gene>
    <name evidence="1" type="primary">ybeY</name>
    <name type="ordered locus">Cagg_1028</name>
</gene>
<name>YBEY_CHLAD</name>
<keyword id="KW-0963">Cytoplasm</keyword>
<keyword id="KW-0255">Endonuclease</keyword>
<keyword id="KW-0378">Hydrolase</keyword>
<keyword id="KW-0479">Metal-binding</keyword>
<keyword id="KW-0540">Nuclease</keyword>
<keyword id="KW-0690">Ribosome biogenesis</keyword>
<keyword id="KW-0698">rRNA processing</keyword>
<keyword id="KW-0862">Zinc</keyword>
<dbReference type="EC" id="3.1.-.-" evidence="1"/>
<dbReference type="EMBL" id="CP001337">
    <property type="protein sequence ID" value="ACL23943.1"/>
    <property type="molecule type" value="Genomic_DNA"/>
</dbReference>
<dbReference type="RefSeq" id="WP_012616308.1">
    <property type="nucleotide sequence ID" value="NC_011831.1"/>
</dbReference>
<dbReference type="SMR" id="B8G6K6"/>
<dbReference type="STRING" id="326427.Cagg_1028"/>
<dbReference type="KEGG" id="cag:Cagg_1028"/>
<dbReference type="eggNOG" id="COG0319">
    <property type="taxonomic scope" value="Bacteria"/>
</dbReference>
<dbReference type="HOGENOM" id="CLU_106710_3_0_0"/>
<dbReference type="OrthoDB" id="9807740at2"/>
<dbReference type="Proteomes" id="UP000002508">
    <property type="component" value="Chromosome"/>
</dbReference>
<dbReference type="GO" id="GO:0005737">
    <property type="term" value="C:cytoplasm"/>
    <property type="evidence" value="ECO:0007669"/>
    <property type="project" value="UniProtKB-SubCell"/>
</dbReference>
<dbReference type="GO" id="GO:0004222">
    <property type="term" value="F:metalloendopeptidase activity"/>
    <property type="evidence" value="ECO:0007669"/>
    <property type="project" value="InterPro"/>
</dbReference>
<dbReference type="GO" id="GO:0004521">
    <property type="term" value="F:RNA endonuclease activity"/>
    <property type="evidence" value="ECO:0007669"/>
    <property type="project" value="UniProtKB-UniRule"/>
</dbReference>
<dbReference type="GO" id="GO:0008270">
    <property type="term" value="F:zinc ion binding"/>
    <property type="evidence" value="ECO:0007669"/>
    <property type="project" value="UniProtKB-UniRule"/>
</dbReference>
<dbReference type="GO" id="GO:0006364">
    <property type="term" value="P:rRNA processing"/>
    <property type="evidence" value="ECO:0007669"/>
    <property type="project" value="UniProtKB-UniRule"/>
</dbReference>
<dbReference type="Gene3D" id="3.40.390.30">
    <property type="entry name" value="Metalloproteases ('zincins'), catalytic domain"/>
    <property type="match status" value="1"/>
</dbReference>
<dbReference type="HAMAP" id="MF_00009">
    <property type="entry name" value="Endoribonucl_YbeY"/>
    <property type="match status" value="1"/>
</dbReference>
<dbReference type="InterPro" id="IPR023091">
    <property type="entry name" value="MetalPrtase_cat_dom_sf_prd"/>
</dbReference>
<dbReference type="InterPro" id="IPR002036">
    <property type="entry name" value="YbeY"/>
</dbReference>
<dbReference type="InterPro" id="IPR020549">
    <property type="entry name" value="YbeY_CS"/>
</dbReference>
<dbReference type="NCBIfam" id="TIGR00043">
    <property type="entry name" value="rRNA maturation RNase YbeY"/>
    <property type="match status" value="1"/>
</dbReference>
<dbReference type="PANTHER" id="PTHR46986">
    <property type="entry name" value="ENDORIBONUCLEASE YBEY, CHLOROPLASTIC"/>
    <property type="match status" value="1"/>
</dbReference>
<dbReference type="PANTHER" id="PTHR46986:SF1">
    <property type="entry name" value="ENDORIBONUCLEASE YBEY, CHLOROPLASTIC"/>
    <property type="match status" value="1"/>
</dbReference>
<dbReference type="Pfam" id="PF02130">
    <property type="entry name" value="YbeY"/>
    <property type="match status" value="1"/>
</dbReference>
<dbReference type="SUPFAM" id="SSF55486">
    <property type="entry name" value="Metalloproteases ('zincins'), catalytic domain"/>
    <property type="match status" value="1"/>
</dbReference>
<dbReference type="PROSITE" id="PS01306">
    <property type="entry name" value="UPF0054"/>
    <property type="match status" value="1"/>
</dbReference>